<reference key="1">
    <citation type="journal article" date="1998" name="Plant J.">
        <title>Molecular cloning and functional heterologous expression of two alleles encoding (S)-N-methylcoclaurine 3'-hydroxylase (CYP80B1), a new methyl jasmonate-inducible cytochrome P-450-dependent mono-oxygenase of benzylisoquinoline alkaloid biosynthesis.</title>
        <authorList>
            <person name="Pauli H.H."/>
            <person name="Kutchan T.M."/>
        </authorList>
    </citation>
    <scope>NUCLEOTIDE SEQUENCE [MRNA]</scope>
    <scope>CATALYTIC ACTIVITY</scope>
</reference>
<feature type="chain" id="PRO_0000052157" description="(S)-N-methylcoclaurine 3'-hydroxylase isozyme 1">
    <location>
        <begin position="1" status="less than"/>
        <end position="487"/>
    </location>
</feature>
<feature type="transmembrane region" description="Helical" evidence="2">
    <location>
        <begin position="4"/>
        <end position="24"/>
    </location>
</feature>
<feature type="binding site" description="axial binding residue" evidence="1">
    <location>
        <position position="429"/>
    </location>
    <ligand>
        <name>heme</name>
        <dbReference type="ChEBI" id="CHEBI:30413"/>
    </ligand>
    <ligandPart>
        <name>Fe</name>
        <dbReference type="ChEBI" id="CHEBI:18248"/>
    </ligandPart>
</feature>
<feature type="non-terminal residue">
    <location>
        <position position="1"/>
    </location>
</feature>
<keyword id="KW-0256">Endoplasmic reticulum</keyword>
<keyword id="KW-0349">Heme</keyword>
<keyword id="KW-0408">Iron</keyword>
<keyword id="KW-0472">Membrane</keyword>
<keyword id="KW-0479">Metal-binding</keyword>
<keyword id="KW-0492">Microsome</keyword>
<keyword id="KW-0503">Monooxygenase</keyword>
<keyword id="KW-0560">Oxidoreductase</keyword>
<keyword id="KW-0812">Transmembrane</keyword>
<keyword id="KW-1133">Transmembrane helix</keyword>
<dbReference type="EC" id="1.14.14.102" evidence="3"/>
<dbReference type="EMBL" id="AF014800">
    <property type="protein sequence ID" value="AAC39452.1"/>
    <property type="molecule type" value="mRNA"/>
</dbReference>
<dbReference type="PIR" id="T07960">
    <property type="entry name" value="T07960"/>
</dbReference>
<dbReference type="SMR" id="O64899"/>
<dbReference type="KEGG" id="ag:AAC39452"/>
<dbReference type="BioCyc" id="MetaCyc:MONOMER-8429"/>
<dbReference type="SABIO-RK" id="O64899"/>
<dbReference type="UniPathway" id="UPA00306">
    <property type="reaction ID" value="UER00443"/>
</dbReference>
<dbReference type="PRO" id="PR:O64899"/>
<dbReference type="GO" id="GO:0005789">
    <property type="term" value="C:endoplasmic reticulum membrane"/>
    <property type="evidence" value="ECO:0007669"/>
    <property type="project" value="UniProtKB-SubCell"/>
</dbReference>
<dbReference type="GO" id="GO:0020037">
    <property type="term" value="F:heme binding"/>
    <property type="evidence" value="ECO:0007669"/>
    <property type="project" value="InterPro"/>
</dbReference>
<dbReference type="GO" id="GO:0005506">
    <property type="term" value="F:iron ion binding"/>
    <property type="evidence" value="ECO:0007669"/>
    <property type="project" value="InterPro"/>
</dbReference>
<dbReference type="GO" id="GO:0050593">
    <property type="term" value="F:N-methylcoclaurine 3'-monooxygenase activity"/>
    <property type="evidence" value="ECO:0007669"/>
    <property type="project" value="UniProtKB-EC"/>
</dbReference>
<dbReference type="GO" id="GO:0033075">
    <property type="term" value="P:isoquinoline alkaloid biosynthetic process"/>
    <property type="evidence" value="ECO:0007669"/>
    <property type="project" value="UniProtKB-ARBA"/>
</dbReference>
<dbReference type="CDD" id="cd11073">
    <property type="entry name" value="CYP76-like"/>
    <property type="match status" value="1"/>
</dbReference>
<dbReference type="FunFam" id="1.10.630.10:FF:000126">
    <property type="entry name" value="Predicted protein"/>
    <property type="match status" value="1"/>
</dbReference>
<dbReference type="Gene3D" id="1.10.630.10">
    <property type="entry name" value="Cytochrome P450"/>
    <property type="match status" value="1"/>
</dbReference>
<dbReference type="InterPro" id="IPR001128">
    <property type="entry name" value="Cyt_P450"/>
</dbReference>
<dbReference type="InterPro" id="IPR017972">
    <property type="entry name" value="Cyt_P450_CS"/>
</dbReference>
<dbReference type="InterPro" id="IPR002401">
    <property type="entry name" value="Cyt_P450_E_grp-I"/>
</dbReference>
<dbReference type="InterPro" id="IPR036396">
    <property type="entry name" value="Cyt_P450_sf"/>
</dbReference>
<dbReference type="PANTHER" id="PTHR47950:SF49">
    <property type="entry name" value="CYTOCHROME P450"/>
    <property type="match status" value="1"/>
</dbReference>
<dbReference type="PANTHER" id="PTHR47950">
    <property type="entry name" value="CYTOCHROME P450, FAMILY 76, SUBFAMILY C, POLYPEPTIDE 5-RELATED"/>
    <property type="match status" value="1"/>
</dbReference>
<dbReference type="Pfam" id="PF00067">
    <property type="entry name" value="p450"/>
    <property type="match status" value="1"/>
</dbReference>
<dbReference type="PRINTS" id="PR00463">
    <property type="entry name" value="EP450I"/>
</dbReference>
<dbReference type="PRINTS" id="PR00385">
    <property type="entry name" value="P450"/>
</dbReference>
<dbReference type="SUPFAM" id="SSF48264">
    <property type="entry name" value="Cytochrome P450"/>
    <property type="match status" value="1"/>
</dbReference>
<dbReference type="PROSITE" id="PS00086">
    <property type="entry name" value="CYTOCHROME_P450"/>
    <property type="match status" value="1"/>
</dbReference>
<sequence length="487" mass="54644">GTSTVALIAVIISSILYLLFGGSGHKNLPPGPKPWPIVGNLLQLGEKPHAQFAELAQTYGDIFTLKMGTETVVVASTSSAASEILKTHDRILSARYVFQSFRVKGHVENSIVWSDCTETWKNLRKVCRTELFTQKMIESQAHVREKKCEEMVEYLMKKQGEEVKIVEVIFGTLVNIFGNLIFSQNIFELGDPNSGSSEFKEYLWRMLELGNSTNPADYFPMLGKFDLFGQRKEVAECLKGIYAIWGAMLQERKLAKKVDGYKSKNDFVDVCLDSGLNDYQINALLMELFGAGTETSASTIEWAMTELTKNPKITAKIRSEIQTVVGERSVKESDFPNLPYLEATVKETLRLHPPTPLLLPRRALETCTILNYTIPKDCQIMVNAWGIGRDPKTWTDPLTFSPERFLNSSVDFRGNDFSLIPFGAGRRICPGLPIANQFIALLVATFVQNLDWCLPNGMSVDHLIVEEKFGLTLQKEPPLFIVPKSRV</sequence>
<name>C80B1_ESCCA</name>
<accession>O64899</accession>
<protein>
    <recommendedName>
        <fullName>(S)-N-methylcoclaurine 3'-hydroxylase isozyme 1</fullName>
        <ecNumber evidence="3">1.14.14.102</ecNumber>
    </recommendedName>
    <alternativeName>
        <fullName>Cytochrome P450 80B1</fullName>
    </alternativeName>
</protein>
<proteinExistence type="evidence at protein level"/>
<evidence type="ECO:0000250" key="1"/>
<evidence type="ECO:0000255" key="2"/>
<evidence type="ECO:0000269" key="3">
    <source>
    </source>
</evidence>
<evidence type="ECO:0000305" key="4"/>
<comment type="function">
    <text>3'-hydroxylation of (S)-N-methylcoclaurine.</text>
</comment>
<comment type="catalytic activity">
    <reaction evidence="3">
        <text>(S)-N-methylcoclaurine + reduced [NADPH--hemoprotein reductase] + O2 = (S)-3'-hydroxy-N-methylcoclaurine + oxidized [NADPH--hemoprotein reductase] + H2O + H(+)</text>
        <dbReference type="Rhea" id="RHEA:16649"/>
        <dbReference type="Rhea" id="RHEA-COMP:11964"/>
        <dbReference type="Rhea" id="RHEA-COMP:11965"/>
        <dbReference type="ChEBI" id="CHEBI:15377"/>
        <dbReference type="ChEBI" id="CHEBI:15378"/>
        <dbReference type="ChEBI" id="CHEBI:15379"/>
        <dbReference type="ChEBI" id="CHEBI:57618"/>
        <dbReference type="ChEBI" id="CHEBI:57993"/>
        <dbReference type="ChEBI" id="CHEBI:58010"/>
        <dbReference type="ChEBI" id="CHEBI:58210"/>
        <dbReference type="EC" id="1.14.14.102"/>
    </reaction>
</comment>
<comment type="cofactor">
    <cofactor>
        <name>heme</name>
        <dbReference type="ChEBI" id="CHEBI:30413"/>
    </cofactor>
</comment>
<comment type="pathway">
    <text>Alkaloid biosynthesis; (S)-reticuline biosynthesis; (S)-reticuline from (S)-norcoclaurine: step 3/4.</text>
</comment>
<comment type="subcellular location">
    <subcellularLocation>
        <location evidence="4">Endoplasmic reticulum membrane</location>
        <topology evidence="4">Single-pass membrane protein</topology>
    </subcellularLocation>
    <subcellularLocation>
        <location evidence="4">Microsome membrane</location>
        <topology evidence="4">Single-pass membrane protein</topology>
    </subcellularLocation>
</comment>
<comment type="similarity">
    <text evidence="4">Belongs to the cytochrome P450 family.</text>
</comment>
<organism>
    <name type="scientific">Eschscholzia californica</name>
    <name type="common">California poppy</name>
    <dbReference type="NCBI Taxonomy" id="3467"/>
    <lineage>
        <taxon>Eukaryota</taxon>
        <taxon>Viridiplantae</taxon>
        <taxon>Streptophyta</taxon>
        <taxon>Embryophyta</taxon>
        <taxon>Tracheophyta</taxon>
        <taxon>Spermatophyta</taxon>
        <taxon>Magnoliopsida</taxon>
        <taxon>Ranunculales</taxon>
        <taxon>Papaveraceae</taxon>
        <taxon>Papaveroideae</taxon>
        <taxon>Eschscholzia</taxon>
    </lineage>
</organism>
<gene>
    <name type="primary">CYP80B1</name>
</gene>